<gene>
    <name evidence="1" type="primary">dxs</name>
    <name type="ordered locus">SPC_0434</name>
</gene>
<reference key="1">
    <citation type="journal article" date="2009" name="PLoS ONE">
        <title>Salmonella paratyphi C: genetic divergence from Salmonella choleraesuis and pathogenic convergence with Salmonella typhi.</title>
        <authorList>
            <person name="Liu W.-Q."/>
            <person name="Feng Y."/>
            <person name="Wang Y."/>
            <person name="Zou Q.-H."/>
            <person name="Chen F."/>
            <person name="Guo J.-T."/>
            <person name="Peng Y.-H."/>
            <person name="Jin Y."/>
            <person name="Li Y.-G."/>
            <person name="Hu S.-N."/>
            <person name="Johnston R.N."/>
            <person name="Liu G.-R."/>
            <person name="Liu S.-L."/>
        </authorList>
    </citation>
    <scope>NUCLEOTIDE SEQUENCE [LARGE SCALE GENOMIC DNA]</scope>
    <source>
        <strain>RKS4594</strain>
    </source>
</reference>
<dbReference type="EC" id="2.2.1.7" evidence="1"/>
<dbReference type="EMBL" id="CP000857">
    <property type="protein sequence ID" value="ACN44617.1"/>
    <property type="molecule type" value="Genomic_DNA"/>
</dbReference>
<dbReference type="RefSeq" id="WP_000006777.1">
    <property type="nucleotide sequence ID" value="NC_012125.1"/>
</dbReference>
<dbReference type="SMR" id="C0Q7U7"/>
<dbReference type="KEGG" id="sei:SPC_0434"/>
<dbReference type="HOGENOM" id="CLU_009227_1_4_6"/>
<dbReference type="UniPathway" id="UPA00064">
    <property type="reaction ID" value="UER00091"/>
</dbReference>
<dbReference type="Proteomes" id="UP000001599">
    <property type="component" value="Chromosome"/>
</dbReference>
<dbReference type="GO" id="GO:0005829">
    <property type="term" value="C:cytosol"/>
    <property type="evidence" value="ECO:0007669"/>
    <property type="project" value="TreeGrafter"/>
</dbReference>
<dbReference type="GO" id="GO:0008661">
    <property type="term" value="F:1-deoxy-D-xylulose-5-phosphate synthase activity"/>
    <property type="evidence" value="ECO:0007669"/>
    <property type="project" value="UniProtKB-UniRule"/>
</dbReference>
<dbReference type="GO" id="GO:0000287">
    <property type="term" value="F:magnesium ion binding"/>
    <property type="evidence" value="ECO:0007669"/>
    <property type="project" value="UniProtKB-UniRule"/>
</dbReference>
<dbReference type="GO" id="GO:0030976">
    <property type="term" value="F:thiamine pyrophosphate binding"/>
    <property type="evidence" value="ECO:0007669"/>
    <property type="project" value="UniProtKB-UniRule"/>
</dbReference>
<dbReference type="GO" id="GO:0052865">
    <property type="term" value="P:1-deoxy-D-xylulose 5-phosphate biosynthetic process"/>
    <property type="evidence" value="ECO:0007669"/>
    <property type="project" value="UniProtKB-UniPathway"/>
</dbReference>
<dbReference type="GO" id="GO:0019288">
    <property type="term" value="P:isopentenyl diphosphate biosynthetic process, methylerythritol 4-phosphate pathway"/>
    <property type="evidence" value="ECO:0007669"/>
    <property type="project" value="TreeGrafter"/>
</dbReference>
<dbReference type="GO" id="GO:0016114">
    <property type="term" value="P:terpenoid biosynthetic process"/>
    <property type="evidence" value="ECO:0007669"/>
    <property type="project" value="UniProtKB-UniRule"/>
</dbReference>
<dbReference type="GO" id="GO:0009228">
    <property type="term" value="P:thiamine biosynthetic process"/>
    <property type="evidence" value="ECO:0007669"/>
    <property type="project" value="UniProtKB-UniRule"/>
</dbReference>
<dbReference type="CDD" id="cd02007">
    <property type="entry name" value="TPP_DXS"/>
    <property type="match status" value="1"/>
</dbReference>
<dbReference type="CDD" id="cd07033">
    <property type="entry name" value="TPP_PYR_DXS_TK_like"/>
    <property type="match status" value="1"/>
</dbReference>
<dbReference type="FunFam" id="3.40.50.920:FF:000002">
    <property type="entry name" value="1-deoxy-D-xylulose-5-phosphate synthase"/>
    <property type="match status" value="1"/>
</dbReference>
<dbReference type="FunFam" id="3.40.50.970:FF:000005">
    <property type="entry name" value="1-deoxy-D-xylulose-5-phosphate synthase"/>
    <property type="match status" value="1"/>
</dbReference>
<dbReference type="Gene3D" id="3.40.50.920">
    <property type="match status" value="1"/>
</dbReference>
<dbReference type="Gene3D" id="3.40.50.970">
    <property type="match status" value="2"/>
</dbReference>
<dbReference type="HAMAP" id="MF_00315">
    <property type="entry name" value="DXP_synth"/>
    <property type="match status" value="1"/>
</dbReference>
<dbReference type="InterPro" id="IPR005477">
    <property type="entry name" value="Dxylulose-5-P_synthase"/>
</dbReference>
<dbReference type="InterPro" id="IPR029061">
    <property type="entry name" value="THDP-binding"/>
</dbReference>
<dbReference type="InterPro" id="IPR009014">
    <property type="entry name" value="Transketo_C/PFOR_II"/>
</dbReference>
<dbReference type="InterPro" id="IPR005475">
    <property type="entry name" value="Transketolase-like_Pyr-bd"/>
</dbReference>
<dbReference type="InterPro" id="IPR020826">
    <property type="entry name" value="Transketolase_BS"/>
</dbReference>
<dbReference type="InterPro" id="IPR033248">
    <property type="entry name" value="Transketolase_C"/>
</dbReference>
<dbReference type="InterPro" id="IPR049557">
    <property type="entry name" value="Transketolase_CS"/>
</dbReference>
<dbReference type="NCBIfam" id="TIGR00204">
    <property type="entry name" value="dxs"/>
    <property type="match status" value="1"/>
</dbReference>
<dbReference type="NCBIfam" id="NF003933">
    <property type="entry name" value="PRK05444.2-2"/>
    <property type="match status" value="1"/>
</dbReference>
<dbReference type="PANTHER" id="PTHR43322">
    <property type="entry name" value="1-D-DEOXYXYLULOSE 5-PHOSPHATE SYNTHASE-RELATED"/>
    <property type="match status" value="1"/>
</dbReference>
<dbReference type="PANTHER" id="PTHR43322:SF5">
    <property type="entry name" value="1-DEOXY-D-XYLULOSE-5-PHOSPHATE SYNTHASE, CHLOROPLASTIC"/>
    <property type="match status" value="1"/>
</dbReference>
<dbReference type="Pfam" id="PF13292">
    <property type="entry name" value="DXP_synthase_N"/>
    <property type="match status" value="1"/>
</dbReference>
<dbReference type="Pfam" id="PF02779">
    <property type="entry name" value="Transket_pyr"/>
    <property type="match status" value="1"/>
</dbReference>
<dbReference type="Pfam" id="PF02780">
    <property type="entry name" value="Transketolase_C"/>
    <property type="match status" value="1"/>
</dbReference>
<dbReference type="SMART" id="SM00861">
    <property type="entry name" value="Transket_pyr"/>
    <property type="match status" value="1"/>
</dbReference>
<dbReference type="SUPFAM" id="SSF52518">
    <property type="entry name" value="Thiamin diphosphate-binding fold (THDP-binding)"/>
    <property type="match status" value="2"/>
</dbReference>
<dbReference type="SUPFAM" id="SSF52922">
    <property type="entry name" value="TK C-terminal domain-like"/>
    <property type="match status" value="1"/>
</dbReference>
<dbReference type="PROSITE" id="PS00801">
    <property type="entry name" value="TRANSKETOLASE_1"/>
    <property type="match status" value="1"/>
</dbReference>
<dbReference type="PROSITE" id="PS00802">
    <property type="entry name" value="TRANSKETOLASE_2"/>
    <property type="match status" value="1"/>
</dbReference>
<feature type="chain" id="PRO_1000132943" description="1-deoxy-D-xylulose-5-phosphate synthase">
    <location>
        <begin position="1"/>
        <end position="620"/>
    </location>
</feature>
<feature type="binding site" evidence="1">
    <location>
        <position position="80"/>
    </location>
    <ligand>
        <name>thiamine diphosphate</name>
        <dbReference type="ChEBI" id="CHEBI:58937"/>
    </ligand>
</feature>
<feature type="binding site" evidence="1">
    <location>
        <begin position="121"/>
        <end position="123"/>
    </location>
    <ligand>
        <name>thiamine diphosphate</name>
        <dbReference type="ChEBI" id="CHEBI:58937"/>
    </ligand>
</feature>
<feature type="binding site" evidence="1">
    <location>
        <position position="152"/>
    </location>
    <ligand>
        <name>Mg(2+)</name>
        <dbReference type="ChEBI" id="CHEBI:18420"/>
    </ligand>
</feature>
<feature type="binding site" evidence="1">
    <location>
        <begin position="153"/>
        <end position="154"/>
    </location>
    <ligand>
        <name>thiamine diphosphate</name>
        <dbReference type="ChEBI" id="CHEBI:58937"/>
    </ligand>
</feature>
<feature type="binding site" evidence="1">
    <location>
        <position position="181"/>
    </location>
    <ligand>
        <name>Mg(2+)</name>
        <dbReference type="ChEBI" id="CHEBI:18420"/>
    </ligand>
</feature>
<feature type="binding site" evidence="1">
    <location>
        <position position="181"/>
    </location>
    <ligand>
        <name>thiamine diphosphate</name>
        <dbReference type="ChEBI" id="CHEBI:58937"/>
    </ligand>
</feature>
<feature type="binding site" evidence="1">
    <location>
        <position position="288"/>
    </location>
    <ligand>
        <name>thiamine diphosphate</name>
        <dbReference type="ChEBI" id="CHEBI:58937"/>
    </ligand>
</feature>
<feature type="binding site" evidence="1">
    <location>
        <position position="370"/>
    </location>
    <ligand>
        <name>thiamine diphosphate</name>
        <dbReference type="ChEBI" id="CHEBI:58937"/>
    </ligand>
</feature>
<evidence type="ECO:0000255" key="1">
    <source>
        <dbReference type="HAMAP-Rule" id="MF_00315"/>
    </source>
</evidence>
<accession>C0Q7U7</accession>
<name>DXS_SALPC</name>
<comment type="function">
    <text evidence="1">Catalyzes the acyloin condensation reaction between C atoms 2 and 3 of pyruvate and glyceraldehyde 3-phosphate to yield 1-deoxy-D-xylulose-5-phosphate (DXP).</text>
</comment>
<comment type="catalytic activity">
    <reaction evidence="1">
        <text>D-glyceraldehyde 3-phosphate + pyruvate + H(+) = 1-deoxy-D-xylulose 5-phosphate + CO2</text>
        <dbReference type="Rhea" id="RHEA:12605"/>
        <dbReference type="ChEBI" id="CHEBI:15361"/>
        <dbReference type="ChEBI" id="CHEBI:15378"/>
        <dbReference type="ChEBI" id="CHEBI:16526"/>
        <dbReference type="ChEBI" id="CHEBI:57792"/>
        <dbReference type="ChEBI" id="CHEBI:59776"/>
        <dbReference type="EC" id="2.2.1.7"/>
    </reaction>
</comment>
<comment type="cofactor">
    <cofactor evidence="1">
        <name>Mg(2+)</name>
        <dbReference type="ChEBI" id="CHEBI:18420"/>
    </cofactor>
    <text evidence="1">Binds 1 Mg(2+) ion per subunit.</text>
</comment>
<comment type="cofactor">
    <cofactor evidence="1">
        <name>thiamine diphosphate</name>
        <dbReference type="ChEBI" id="CHEBI:58937"/>
    </cofactor>
    <text evidence="1">Binds 1 thiamine pyrophosphate per subunit.</text>
</comment>
<comment type="pathway">
    <text evidence="1">Metabolic intermediate biosynthesis; 1-deoxy-D-xylulose 5-phosphate biosynthesis; 1-deoxy-D-xylulose 5-phosphate from D-glyceraldehyde 3-phosphate and pyruvate: step 1/1.</text>
</comment>
<comment type="subunit">
    <text evidence="1">Homodimer.</text>
</comment>
<comment type="similarity">
    <text evidence="1">Belongs to the transketolase family. DXPS subfamily.</text>
</comment>
<protein>
    <recommendedName>
        <fullName evidence="1">1-deoxy-D-xylulose-5-phosphate synthase</fullName>
        <ecNumber evidence="1">2.2.1.7</ecNumber>
    </recommendedName>
    <alternativeName>
        <fullName evidence="1">1-deoxyxylulose-5-phosphate synthase</fullName>
        <shortName evidence="1">DXP synthase</shortName>
        <shortName evidence="1">DXPS</shortName>
    </alternativeName>
</protein>
<keyword id="KW-0414">Isoprene biosynthesis</keyword>
<keyword id="KW-0460">Magnesium</keyword>
<keyword id="KW-0479">Metal-binding</keyword>
<keyword id="KW-0784">Thiamine biosynthesis</keyword>
<keyword id="KW-0786">Thiamine pyrophosphate</keyword>
<keyword id="KW-0808">Transferase</keyword>
<proteinExistence type="inferred from homology"/>
<sequence length="620" mass="67468">MSFDIAKYPTLALVDSTQELRLLPKESLPKLCDELRRYLLDSVSRSSGHFASGLGTVELTVALHYVYNTPFDQLIWDVGHQAYPHKILTGRRDKIGTIRQKGGLHPFPWRGESEYDVLSVGHSSTSISAGIGIAVAAEKEGKDRRTVCVIGDGAITAGMAFEAMNHAGDIRPDMLVILNDNEMSISENVGALNNHLAQLLSGKLYSSLREGGKKVFSGVPPIKELLKRTEEHIKGMVVPGTLFEELGFNYIGPVDGHDVMGLISTLKNMRDLKGPQFLHIMTKKGRGYEPAEKDPITFHAVPKFDPSSGCLPKSSGGLPGYSKIFGDWLCETAAKDSKLMAITPAMREGSGMVEFSRKFPDRYFDVAIAEQHAVTFAAGLAIGGYKPVVAIYSTFLQRAYDQVIHDVAIQKLPVMFAIDRAGIVGADGQTHQGAFDLSYLRCIPDMVIMTPSDENECRQMLFTGYHYNDGPTAVRYPRGNAQGVALTPLEKLPIGKGLVKRHGEKLAILNFGTLMPEAAKVAEALNATLVDMRFVKPLDDTLILEMAAQHDALVTLEENAIMGGAGSGVNEVLMAHRKPVPVLNIGLPDFFIPQGTQEEARAELGLDAAGIEAKIKAWLA</sequence>
<organism>
    <name type="scientific">Salmonella paratyphi C (strain RKS4594)</name>
    <dbReference type="NCBI Taxonomy" id="476213"/>
    <lineage>
        <taxon>Bacteria</taxon>
        <taxon>Pseudomonadati</taxon>
        <taxon>Pseudomonadota</taxon>
        <taxon>Gammaproteobacteria</taxon>
        <taxon>Enterobacterales</taxon>
        <taxon>Enterobacteriaceae</taxon>
        <taxon>Salmonella</taxon>
    </lineage>
</organism>